<protein>
    <recommendedName>
        <fullName evidence="1">Ribosome-recycling factor</fullName>
        <shortName evidence="1">RRF</shortName>
    </recommendedName>
    <alternativeName>
        <fullName evidence="1">Ribosome-releasing factor</fullName>
    </alternativeName>
</protein>
<gene>
    <name evidence="1" type="primary">frr</name>
    <name type="ordered locus">Hore_07680</name>
</gene>
<name>RRF_HALOH</name>
<dbReference type="EMBL" id="CP001098">
    <property type="protein sequence ID" value="ACL69525.1"/>
    <property type="molecule type" value="Genomic_DNA"/>
</dbReference>
<dbReference type="RefSeq" id="WP_012635713.1">
    <property type="nucleotide sequence ID" value="NC_011899.1"/>
</dbReference>
<dbReference type="SMR" id="B8CW56"/>
<dbReference type="STRING" id="373903.Hore_07680"/>
<dbReference type="KEGG" id="hor:Hore_07680"/>
<dbReference type="eggNOG" id="COG0233">
    <property type="taxonomic scope" value="Bacteria"/>
</dbReference>
<dbReference type="HOGENOM" id="CLU_073981_2_0_9"/>
<dbReference type="OrthoDB" id="9804006at2"/>
<dbReference type="Proteomes" id="UP000000719">
    <property type="component" value="Chromosome"/>
</dbReference>
<dbReference type="GO" id="GO:0005737">
    <property type="term" value="C:cytoplasm"/>
    <property type="evidence" value="ECO:0007669"/>
    <property type="project" value="UniProtKB-SubCell"/>
</dbReference>
<dbReference type="GO" id="GO:0043023">
    <property type="term" value="F:ribosomal large subunit binding"/>
    <property type="evidence" value="ECO:0007669"/>
    <property type="project" value="TreeGrafter"/>
</dbReference>
<dbReference type="GO" id="GO:0006415">
    <property type="term" value="P:translational termination"/>
    <property type="evidence" value="ECO:0007669"/>
    <property type="project" value="UniProtKB-UniRule"/>
</dbReference>
<dbReference type="CDD" id="cd00520">
    <property type="entry name" value="RRF"/>
    <property type="match status" value="1"/>
</dbReference>
<dbReference type="FunFam" id="1.10.132.20:FF:000001">
    <property type="entry name" value="Ribosome-recycling factor"/>
    <property type="match status" value="1"/>
</dbReference>
<dbReference type="FunFam" id="3.30.1360.40:FF:000001">
    <property type="entry name" value="Ribosome-recycling factor"/>
    <property type="match status" value="1"/>
</dbReference>
<dbReference type="Gene3D" id="3.30.1360.40">
    <property type="match status" value="1"/>
</dbReference>
<dbReference type="Gene3D" id="1.10.132.20">
    <property type="entry name" value="Ribosome-recycling factor"/>
    <property type="match status" value="1"/>
</dbReference>
<dbReference type="HAMAP" id="MF_00040">
    <property type="entry name" value="RRF"/>
    <property type="match status" value="1"/>
</dbReference>
<dbReference type="InterPro" id="IPR002661">
    <property type="entry name" value="Ribosome_recyc_fac"/>
</dbReference>
<dbReference type="InterPro" id="IPR023584">
    <property type="entry name" value="Ribosome_recyc_fac_dom"/>
</dbReference>
<dbReference type="InterPro" id="IPR036191">
    <property type="entry name" value="RRF_sf"/>
</dbReference>
<dbReference type="NCBIfam" id="TIGR00496">
    <property type="entry name" value="frr"/>
    <property type="match status" value="1"/>
</dbReference>
<dbReference type="PANTHER" id="PTHR20982:SF3">
    <property type="entry name" value="MITOCHONDRIAL RIBOSOME RECYCLING FACTOR PSEUDO 1"/>
    <property type="match status" value="1"/>
</dbReference>
<dbReference type="PANTHER" id="PTHR20982">
    <property type="entry name" value="RIBOSOME RECYCLING FACTOR"/>
    <property type="match status" value="1"/>
</dbReference>
<dbReference type="Pfam" id="PF01765">
    <property type="entry name" value="RRF"/>
    <property type="match status" value="1"/>
</dbReference>
<dbReference type="SUPFAM" id="SSF55194">
    <property type="entry name" value="Ribosome recycling factor, RRF"/>
    <property type="match status" value="1"/>
</dbReference>
<evidence type="ECO:0000255" key="1">
    <source>
        <dbReference type="HAMAP-Rule" id="MF_00040"/>
    </source>
</evidence>
<sequence length="185" mass="21423">MIKQVEKNAKQKMEKVLEATKHDLNTVRTGRARPSLVENIMVDYYGTQTPIQQMAKVVAPEARQLVIEPWDKSVIESIEKAILKSNLGLNPSNDGNVIRINIPQLTEERRKELVKVAHEKAEKGRIAIRNIRREANDELKEMEKNSEISEDNYHRGLDMIQELTDTYIDKIDKMLEDKEQDIMEV</sequence>
<keyword id="KW-0963">Cytoplasm</keyword>
<keyword id="KW-0648">Protein biosynthesis</keyword>
<keyword id="KW-1185">Reference proteome</keyword>
<proteinExistence type="inferred from homology"/>
<accession>B8CW56</accession>
<organism>
    <name type="scientific">Halothermothrix orenii (strain H 168 / OCM 544 / DSM 9562)</name>
    <dbReference type="NCBI Taxonomy" id="373903"/>
    <lineage>
        <taxon>Bacteria</taxon>
        <taxon>Bacillati</taxon>
        <taxon>Bacillota</taxon>
        <taxon>Clostridia</taxon>
        <taxon>Halanaerobiales</taxon>
        <taxon>Halothermotrichaceae</taxon>
        <taxon>Halothermothrix</taxon>
    </lineage>
</organism>
<comment type="function">
    <text evidence="1">Responsible for the release of ribosomes from messenger RNA at the termination of protein biosynthesis. May increase the efficiency of translation by recycling ribosomes from one round of translation to another.</text>
</comment>
<comment type="subcellular location">
    <subcellularLocation>
        <location evidence="1">Cytoplasm</location>
    </subcellularLocation>
</comment>
<comment type="similarity">
    <text evidence="1">Belongs to the RRF family.</text>
</comment>
<feature type="chain" id="PRO_1000194934" description="Ribosome-recycling factor">
    <location>
        <begin position="1"/>
        <end position="185"/>
    </location>
</feature>
<reference key="1">
    <citation type="journal article" date="2009" name="PLoS ONE">
        <title>Genome analysis of the anaerobic thermohalophilic bacterium Halothermothrix orenii.</title>
        <authorList>
            <person name="Mavromatis K."/>
            <person name="Ivanova N."/>
            <person name="Anderson I."/>
            <person name="Lykidis A."/>
            <person name="Hooper S.D."/>
            <person name="Sun H."/>
            <person name="Kunin V."/>
            <person name="Lapidus A."/>
            <person name="Hugenholtz P."/>
            <person name="Patel B."/>
            <person name="Kyrpides N.C."/>
        </authorList>
    </citation>
    <scope>NUCLEOTIDE SEQUENCE [LARGE SCALE GENOMIC DNA]</scope>
    <source>
        <strain>H 168 / OCM 544 / DSM 9562</strain>
    </source>
</reference>